<proteinExistence type="inferred from homology"/>
<sequence>MNDTVKKPTGGRGDDPLPAGAALSAVAPHEPVSVVLAGGGTAGHVEPAMAVADALKALDPHVRITALGTARGLETRLVPERGYDLELITPVPLPRKPTGDLARLPSRVWRAVRETRAVLHAVDADVVIGFGGYVALPAYLAARGVSPRKPRVPVVIHEANASAGLANRVGARTAQRVLSAVPDCGLPGAEVVGVPVREAITSLDRAALRAEARRHFGFADDARVLLVFGGSQGAASLNRAVSGAAAQLAAAGVSVLHAHGPKNTLDLREPQPGDPPYVAVPYLDRMDLAYAAADLVICRSGAMTVAEVSAVGLPAIYVPLPIGNGEQRLNALPVVDAGGGMVVADADLTPELVAREVAGLVGDPPRLAAMTTAAARVGHPDAARRVAQAALDIGRTARLARGATGGRP</sequence>
<keyword id="KW-0131">Cell cycle</keyword>
<keyword id="KW-0132">Cell division</keyword>
<keyword id="KW-1003">Cell membrane</keyword>
<keyword id="KW-0133">Cell shape</keyword>
<keyword id="KW-0961">Cell wall biogenesis/degradation</keyword>
<keyword id="KW-0328">Glycosyltransferase</keyword>
<keyword id="KW-0472">Membrane</keyword>
<keyword id="KW-0573">Peptidoglycan synthesis</keyword>
<keyword id="KW-1185">Reference proteome</keyword>
<keyword id="KW-0808">Transferase</keyword>
<reference key="1">
    <citation type="journal article" date="2005" name="Proc. Natl. Acad. Sci. U.S.A.">
        <title>The complete genome sequence of Mycobacterium avium subspecies paratuberculosis.</title>
        <authorList>
            <person name="Li L."/>
            <person name="Bannantine J.P."/>
            <person name="Zhang Q."/>
            <person name="Amonsin A."/>
            <person name="May B.J."/>
            <person name="Alt D."/>
            <person name="Banerji N."/>
            <person name="Kanjilal S."/>
            <person name="Kapur V."/>
        </authorList>
    </citation>
    <scope>NUCLEOTIDE SEQUENCE [LARGE SCALE GENOMIC DNA]</scope>
    <source>
        <strain>ATCC BAA-968 / K-10</strain>
    </source>
</reference>
<protein>
    <recommendedName>
        <fullName evidence="1">UDP-N-acetylglucosamine--N-acetylmuramyl-(pentapeptide) pyrophosphoryl-undecaprenol N-acetylglucosamine transferase</fullName>
        <ecNumber evidence="1">2.4.1.227</ecNumber>
    </recommendedName>
    <alternativeName>
        <fullName evidence="1">Undecaprenyl-PP-MurNAc-pentapeptide-UDPGlcNAc GlcNAc transferase</fullName>
    </alternativeName>
</protein>
<name>MURG_MYCPA</name>
<dbReference type="EC" id="2.4.1.227" evidence="1"/>
<dbReference type="EMBL" id="AE016958">
    <property type="protein sequence ID" value="AAS04214.1"/>
    <property type="molecule type" value="Genomic_DNA"/>
</dbReference>
<dbReference type="RefSeq" id="WP_003878116.1">
    <property type="nucleotide sequence ID" value="NC_002944.2"/>
</dbReference>
<dbReference type="SMR" id="Q73YQ8"/>
<dbReference type="STRING" id="262316.MAP_1897c"/>
<dbReference type="CAZy" id="GT28">
    <property type="family name" value="Glycosyltransferase Family 28"/>
</dbReference>
<dbReference type="KEGG" id="mpa:MAP_1897c"/>
<dbReference type="PATRIC" id="fig|262316.17.peg.2011"/>
<dbReference type="eggNOG" id="COG0707">
    <property type="taxonomic scope" value="Bacteria"/>
</dbReference>
<dbReference type="HOGENOM" id="CLU_037404_1_0_11"/>
<dbReference type="UniPathway" id="UPA00219"/>
<dbReference type="Proteomes" id="UP000000580">
    <property type="component" value="Chromosome"/>
</dbReference>
<dbReference type="GO" id="GO:0005886">
    <property type="term" value="C:plasma membrane"/>
    <property type="evidence" value="ECO:0007669"/>
    <property type="project" value="UniProtKB-SubCell"/>
</dbReference>
<dbReference type="GO" id="GO:0051991">
    <property type="term" value="F:UDP-N-acetyl-D-glucosamine:N-acetylmuramoyl-L-alanyl-D-glutamyl-meso-2,6-diaminopimelyl-D-alanyl-D-alanine-diphosphoundecaprenol 4-beta-N-acetylglucosaminlytransferase activity"/>
    <property type="evidence" value="ECO:0007669"/>
    <property type="project" value="RHEA"/>
</dbReference>
<dbReference type="GO" id="GO:0050511">
    <property type="term" value="F:undecaprenyldiphospho-muramoylpentapeptide beta-N-acetylglucosaminyltransferase activity"/>
    <property type="evidence" value="ECO:0007669"/>
    <property type="project" value="UniProtKB-UniRule"/>
</dbReference>
<dbReference type="GO" id="GO:0005975">
    <property type="term" value="P:carbohydrate metabolic process"/>
    <property type="evidence" value="ECO:0007669"/>
    <property type="project" value="InterPro"/>
</dbReference>
<dbReference type="GO" id="GO:0051301">
    <property type="term" value="P:cell division"/>
    <property type="evidence" value="ECO:0007669"/>
    <property type="project" value="UniProtKB-KW"/>
</dbReference>
<dbReference type="GO" id="GO:0071555">
    <property type="term" value="P:cell wall organization"/>
    <property type="evidence" value="ECO:0007669"/>
    <property type="project" value="UniProtKB-KW"/>
</dbReference>
<dbReference type="GO" id="GO:0030259">
    <property type="term" value="P:lipid glycosylation"/>
    <property type="evidence" value="ECO:0007669"/>
    <property type="project" value="UniProtKB-UniRule"/>
</dbReference>
<dbReference type="GO" id="GO:0009252">
    <property type="term" value="P:peptidoglycan biosynthetic process"/>
    <property type="evidence" value="ECO:0007669"/>
    <property type="project" value="UniProtKB-UniRule"/>
</dbReference>
<dbReference type="GO" id="GO:0008360">
    <property type="term" value="P:regulation of cell shape"/>
    <property type="evidence" value="ECO:0007669"/>
    <property type="project" value="UniProtKB-KW"/>
</dbReference>
<dbReference type="CDD" id="cd03785">
    <property type="entry name" value="GT28_MurG"/>
    <property type="match status" value="1"/>
</dbReference>
<dbReference type="Gene3D" id="3.40.50.2000">
    <property type="entry name" value="Glycogen Phosphorylase B"/>
    <property type="match status" value="2"/>
</dbReference>
<dbReference type="HAMAP" id="MF_00033">
    <property type="entry name" value="MurG"/>
    <property type="match status" value="1"/>
</dbReference>
<dbReference type="InterPro" id="IPR006009">
    <property type="entry name" value="GlcNAc_MurG"/>
</dbReference>
<dbReference type="InterPro" id="IPR007235">
    <property type="entry name" value="Glyco_trans_28_C"/>
</dbReference>
<dbReference type="InterPro" id="IPR004276">
    <property type="entry name" value="GlycoTrans_28_N"/>
</dbReference>
<dbReference type="NCBIfam" id="TIGR01133">
    <property type="entry name" value="murG"/>
    <property type="match status" value="1"/>
</dbReference>
<dbReference type="PANTHER" id="PTHR21015:SF22">
    <property type="entry name" value="GLYCOSYLTRANSFERASE"/>
    <property type="match status" value="1"/>
</dbReference>
<dbReference type="PANTHER" id="PTHR21015">
    <property type="entry name" value="UDP-N-ACETYLGLUCOSAMINE--N-ACETYLMURAMYL-(PENTAPEPTIDE) PYROPHOSPHORYL-UNDECAPRENOL N-ACETYLGLUCOSAMINE TRANSFERASE 1"/>
    <property type="match status" value="1"/>
</dbReference>
<dbReference type="Pfam" id="PF04101">
    <property type="entry name" value="Glyco_tran_28_C"/>
    <property type="match status" value="1"/>
</dbReference>
<dbReference type="Pfam" id="PF03033">
    <property type="entry name" value="Glyco_transf_28"/>
    <property type="match status" value="1"/>
</dbReference>
<dbReference type="SUPFAM" id="SSF53756">
    <property type="entry name" value="UDP-Glycosyltransferase/glycogen phosphorylase"/>
    <property type="match status" value="1"/>
</dbReference>
<organism>
    <name type="scientific">Mycolicibacterium paratuberculosis (strain ATCC BAA-968 / K-10)</name>
    <name type="common">Mycobacterium paratuberculosis</name>
    <dbReference type="NCBI Taxonomy" id="262316"/>
    <lineage>
        <taxon>Bacteria</taxon>
        <taxon>Bacillati</taxon>
        <taxon>Actinomycetota</taxon>
        <taxon>Actinomycetes</taxon>
        <taxon>Mycobacteriales</taxon>
        <taxon>Mycobacteriaceae</taxon>
        <taxon>Mycobacterium</taxon>
        <taxon>Mycobacterium avium complex (MAC)</taxon>
    </lineage>
</organism>
<gene>
    <name evidence="1" type="primary">murG</name>
    <name type="ordered locus">MAP_1897c</name>
</gene>
<feature type="chain" id="PRO_0000225068" description="UDP-N-acetylglucosamine--N-acetylmuramyl-(pentapeptide) pyrophosphoryl-undecaprenol N-acetylglucosamine transferase">
    <location>
        <begin position="1"/>
        <end position="408"/>
    </location>
</feature>
<feature type="region of interest" description="Disordered" evidence="2">
    <location>
        <begin position="1"/>
        <end position="20"/>
    </location>
</feature>
<feature type="binding site" evidence="1">
    <location>
        <begin position="41"/>
        <end position="43"/>
    </location>
    <ligand>
        <name>UDP-N-acetyl-alpha-D-glucosamine</name>
        <dbReference type="ChEBI" id="CHEBI:57705"/>
    </ligand>
</feature>
<feature type="binding site" evidence="1">
    <location>
        <position position="160"/>
    </location>
    <ligand>
        <name>UDP-N-acetyl-alpha-D-glucosamine</name>
        <dbReference type="ChEBI" id="CHEBI:57705"/>
    </ligand>
</feature>
<feature type="binding site" evidence="1">
    <location>
        <position position="197"/>
    </location>
    <ligand>
        <name>UDP-N-acetyl-alpha-D-glucosamine</name>
        <dbReference type="ChEBI" id="CHEBI:57705"/>
    </ligand>
</feature>
<feature type="binding site" evidence="1">
    <location>
        <position position="231"/>
    </location>
    <ligand>
        <name>UDP-N-acetyl-alpha-D-glucosamine</name>
        <dbReference type="ChEBI" id="CHEBI:57705"/>
    </ligand>
</feature>
<feature type="binding site" evidence="1">
    <location>
        <position position="327"/>
    </location>
    <ligand>
        <name>UDP-N-acetyl-alpha-D-glucosamine</name>
        <dbReference type="ChEBI" id="CHEBI:57705"/>
    </ligand>
</feature>
<evidence type="ECO:0000255" key="1">
    <source>
        <dbReference type="HAMAP-Rule" id="MF_00033"/>
    </source>
</evidence>
<evidence type="ECO:0000256" key="2">
    <source>
        <dbReference type="SAM" id="MobiDB-lite"/>
    </source>
</evidence>
<accession>Q73YQ8</accession>
<comment type="function">
    <text evidence="1">Cell wall formation. Catalyzes the transfer of a GlcNAc subunit on undecaprenyl-pyrophosphoryl-MurNAc-pentapeptide (lipid intermediate I) to form undecaprenyl-pyrophosphoryl-MurNAc-(pentapeptide)GlcNAc (lipid intermediate II).</text>
</comment>
<comment type="catalytic activity">
    <reaction evidence="1">
        <text>di-trans,octa-cis-undecaprenyl diphospho-N-acetyl-alpha-D-muramoyl-L-alanyl-D-glutamyl-meso-2,6-diaminopimeloyl-D-alanyl-D-alanine + UDP-N-acetyl-alpha-D-glucosamine = di-trans,octa-cis-undecaprenyl diphospho-[N-acetyl-alpha-D-glucosaminyl-(1-&gt;4)]-N-acetyl-alpha-D-muramoyl-L-alanyl-D-glutamyl-meso-2,6-diaminopimeloyl-D-alanyl-D-alanine + UDP + H(+)</text>
        <dbReference type="Rhea" id="RHEA:31227"/>
        <dbReference type="ChEBI" id="CHEBI:15378"/>
        <dbReference type="ChEBI" id="CHEBI:57705"/>
        <dbReference type="ChEBI" id="CHEBI:58223"/>
        <dbReference type="ChEBI" id="CHEBI:61387"/>
        <dbReference type="ChEBI" id="CHEBI:61388"/>
        <dbReference type="EC" id="2.4.1.227"/>
    </reaction>
</comment>
<comment type="pathway">
    <text evidence="1">Cell wall biogenesis; peptidoglycan biosynthesis.</text>
</comment>
<comment type="subcellular location">
    <subcellularLocation>
        <location evidence="1">Cell membrane</location>
        <topology evidence="1">Peripheral membrane protein</topology>
        <orientation evidence="1">Cytoplasmic side</orientation>
    </subcellularLocation>
</comment>
<comment type="similarity">
    <text evidence="1">Belongs to the glycosyltransferase 28 family. MurG subfamily.</text>
</comment>